<comment type="function">
    <text evidence="1">Catalyzes the adenylation by ATP of the carboxyl group of the C-terminal glycine of sulfur carrier protein moaD.</text>
</comment>
<comment type="catalytic activity">
    <reaction>
        <text>[molybdopterin-synthase sulfur-carrier protein]-C-terminal Gly-Gly + ATP + H(+) = [molybdopterin-synthase sulfur-carrier protein]-C-terminal Gly-Gly-AMP + diphosphate</text>
        <dbReference type="Rhea" id="RHEA:43616"/>
        <dbReference type="Rhea" id="RHEA-COMP:12159"/>
        <dbReference type="Rhea" id="RHEA-COMP:12202"/>
        <dbReference type="ChEBI" id="CHEBI:15378"/>
        <dbReference type="ChEBI" id="CHEBI:30616"/>
        <dbReference type="ChEBI" id="CHEBI:33019"/>
        <dbReference type="ChEBI" id="CHEBI:90618"/>
        <dbReference type="ChEBI" id="CHEBI:90778"/>
        <dbReference type="EC" id="2.7.7.80"/>
    </reaction>
</comment>
<comment type="pathway">
    <text>Cofactor biosynthesis; molybdopterin biosynthesis.</text>
</comment>
<comment type="subcellular location">
    <subcellularLocation>
        <location>Plastid</location>
        <location>Chloroplast</location>
    </subcellularLocation>
</comment>
<comment type="similarity">
    <text evidence="3">Belongs to the HesA/MoeB/ThiF family.</text>
</comment>
<name>MOEB_GRATL</name>
<accession>Q6B908</accession>
<feature type="chain" id="PRO_0000277343" description="Probable molybdopterin-synthase adenylyltransferase">
    <location>
        <begin position="1"/>
        <end position="355"/>
    </location>
</feature>
<feature type="domain" description="Rhodanese" evidence="2">
    <location>
        <begin position="277"/>
        <end position="355"/>
    </location>
</feature>
<feature type="binding site" evidence="1">
    <location>
        <position position="47"/>
    </location>
    <ligand>
        <name>ATP</name>
        <dbReference type="ChEBI" id="CHEBI:30616"/>
    </ligand>
</feature>
<feature type="binding site" evidence="1">
    <location>
        <position position="68"/>
    </location>
    <ligand>
        <name>ATP</name>
        <dbReference type="ChEBI" id="CHEBI:30616"/>
    </ligand>
</feature>
<feature type="binding site" evidence="1">
    <location>
        <begin position="75"/>
        <end position="79"/>
    </location>
    <ligand>
        <name>ATP</name>
        <dbReference type="ChEBI" id="CHEBI:30616"/>
    </ligand>
</feature>
<feature type="binding site" evidence="1">
    <location>
        <position position="92"/>
    </location>
    <ligand>
        <name>ATP</name>
        <dbReference type="ChEBI" id="CHEBI:30616"/>
    </ligand>
</feature>
<feature type="binding site" evidence="1">
    <location>
        <begin position="136"/>
        <end position="137"/>
    </location>
    <ligand>
        <name>ATP</name>
        <dbReference type="ChEBI" id="CHEBI:30616"/>
    </ligand>
</feature>
<gene>
    <name type="primary">moeB</name>
    <name type="ordered locus">Grc000046</name>
</gene>
<protein>
    <recommendedName>
        <fullName>Probable molybdopterin-synthase adenylyltransferase</fullName>
        <ecNumber>2.7.7.80</ecNumber>
    </recommendedName>
    <alternativeName>
        <fullName>MoaD protein adenylase</fullName>
    </alternativeName>
    <alternativeName>
        <fullName>Molybdopterin-converting factor subunit 1 adenylase</fullName>
    </alternativeName>
    <alternativeName>
        <fullName>Sulfur carrier protein MoaD adenylyltransferase</fullName>
    </alternativeName>
</protein>
<proteinExistence type="inferred from homology"/>
<geneLocation type="chloroplast"/>
<reference key="1">
    <citation type="journal article" date="2004" name="J. Mol. Evol.">
        <title>Comparative analysis of the complete plastid genome sequence of the red alga Gracilaria tenuistipitata var. liui provides insights into the evolution of rhodoplasts and their relationship to other plastids.</title>
        <authorList>
            <person name="Hagopian J.C."/>
            <person name="Reis M."/>
            <person name="Kitajima J.P."/>
            <person name="Bhattacharya D."/>
            <person name="de Oliveira M.C."/>
        </authorList>
    </citation>
    <scope>NUCLEOTIDE SEQUENCE [LARGE SCALE GENOMIC DNA]</scope>
</reference>
<evidence type="ECO:0000250" key="1"/>
<evidence type="ECO:0000255" key="2">
    <source>
        <dbReference type="PROSITE-ProRule" id="PRU00173"/>
    </source>
</evidence>
<evidence type="ECO:0000305" key="3"/>
<keyword id="KW-0067">ATP-binding</keyword>
<keyword id="KW-0150">Chloroplast</keyword>
<keyword id="KW-0501">Molybdenum cofactor biosynthesis</keyword>
<keyword id="KW-0547">Nucleotide-binding</keyword>
<keyword id="KW-0548">Nucleotidyltransferase</keyword>
<keyword id="KW-0934">Plastid</keyword>
<keyword id="KW-0808">Transferase</keyword>
<organism>
    <name type="scientific">Gracilaria tenuistipitata var. liui</name>
    <name type="common">Red alga</name>
    <dbReference type="NCBI Taxonomy" id="285951"/>
    <lineage>
        <taxon>Eukaryota</taxon>
        <taxon>Rhodophyta</taxon>
        <taxon>Florideophyceae</taxon>
        <taxon>Rhodymeniophycidae</taxon>
        <taxon>Gracilariales</taxon>
        <taxon>Gracilariaceae</taxon>
        <taxon>Gracilaria</taxon>
        <taxon>Gracilaria tenuistipitata</taxon>
    </lineage>
</organism>
<sequence>MSYSITNSSLSELEYKKYARHLVLDNIGDSGQKRLKAAKILFIGAGGLAASAILYLAASGVNCLGVADDDKVDYSNLHRQILYNNKDVGKLKVGIVYDRIKMINPECNVNVYSSLVDEYNCEYIIKNYDIVIDTTDNFQSRYIISKSCYLQHKVHIYGAVRGFEGHISVFNYRSGPIYSDLYPQSLNLDVKECNMFGVLGVTTGIIGIFQAVEAMKVILGIGNILSGYLLVYNLLDASFKKFKILPKNNINVAHYHFNNQFAYCNIISEQDLSLIRSKYKIILIDVRQPEEFIKHHLLKAINIPLKNIRSRKNMYFMRDFLIDKIIIVYCYDNLRSLIASQILYKHRISHYLLNY</sequence>
<dbReference type="EC" id="2.7.7.80"/>
<dbReference type="EMBL" id="AY673996">
    <property type="protein sequence ID" value="AAT79627.1"/>
    <property type="molecule type" value="Genomic_DNA"/>
</dbReference>
<dbReference type="RefSeq" id="YP_063552.1">
    <property type="nucleotide sequence ID" value="NC_006137.1"/>
</dbReference>
<dbReference type="SMR" id="Q6B908"/>
<dbReference type="GeneID" id="2944035"/>
<dbReference type="UniPathway" id="UPA00344"/>
<dbReference type="GO" id="GO:0009507">
    <property type="term" value="C:chloroplast"/>
    <property type="evidence" value="ECO:0007669"/>
    <property type="project" value="UniProtKB-SubCell"/>
</dbReference>
<dbReference type="GO" id="GO:0005829">
    <property type="term" value="C:cytosol"/>
    <property type="evidence" value="ECO:0007669"/>
    <property type="project" value="TreeGrafter"/>
</dbReference>
<dbReference type="GO" id="GO:0005524">
    <property type="term" value="F:ATP binding"/>
    <property type="evidence" value="ECO:0007669"/>
    <property type="project" value="UniProtKB-KW"/>
</dbReference>
<dbReference type="GO" id="GO:0061605">
    <property type="term" value="F:molybdopterin-synthase adenylyltransferase activity"/>
    <property type="evidence" value="ECO:0007669"/>
    <property type="project" value="UniProtKB-EC"/>
</dbReference>
<dbReference type="GO" id="GO:0008146">
    <property type="term" value="F:sulfotransferase activity"/>
    <property type="evidence" value="ECO:0007669"/>
    <property type="project" value="TreeGrafter"/>
</dbReference>
<dbReference type="GO" id="GO:0004792">
    <property type="term" value="F:thiosulfate-cyanide sulfurtransferase activity"/>
    <property type="evidence" value="ECO:0007669"/>
    <property type="project" value="TreeGrafter"/>
</dbReference>
<dbReference type="GO" id="GO:0008641">
    <property type="term" value="F:ubiquitin-like modifier activating enzyme activity"/>
    <property type="evidence" value="ECO:0007669"/>
    <property type="project" value="InterPro"/>
</dbReference>
<dbReference type="GO" id="GO:0006777">
    <property type="term" value="P:Mo-molybdopterin cofactor biosynthetic process"/>
    <property type="evidence" value="ECO:0007669"/>
    <property type="project" value="UniProtKB-KW"/>
</dbReference>
<dbReference type="CDD" id="cd00158">
    <property type="entry name" value="RHOD"/>
    <property type="match status" value="1"/>
</dbReference>
<dbReference type="CDD" id="cd00757">
    <property type="entry name" value="ThiF_MoeB_HesA_family"/>
    <property type="match status" value="1"/>
</dbReference>
<dbReference type="FunFam" id="3.40.50.720:FF:000080">
    <property type="entry name" value="Thiazole biosynthesis adenylyltransferase ThiF"/>
    <property type="match status" value="1"/>
</dbReference>
<dbReference type="Gene3D" id="3.40.50.720">
    <property type="entry name" value="NAD(P)-binding Rossmann-like Domain"/>
    <property type="match status" value="1"/>
</dbReference>
<dbReference type="Gene3D" id="3.40.250.10">
    <property type="entry name" value="Rhodanese-like domain"/>
    <property type="match status" value="1"/>
</dbReference>
<dbReference type="InterPro" id="IPR001763">
    <property type="entry name" value="Rhodanese-like_dom"/>
</dbReference>
<dbReference type="InterPro" id="IPR036873">
    <property type="entry name" value="Rhodanese-like_dom_sf"/>
</dbReference>
<dbReference type="InterPro" id="IPR045886">
    <property type="entry name" value="ThiF/MoeB/HesA"/>
</dbReference>
<dbReference type="InterPro" id="IPR000594">
    <property type="entry name" value="ThiF_NAD_FAD-bd"/>
</dbReference>
<dbReference type="InterPro" id="IPR035985">
    <property type="entry name" value="Ubiquitin-activating_enz"/>
</dbReference>
<dbReference type="PANTHER" id="PTHR10953:SF102">
    <property type="entry name" value="ADENYLYLTRANSFERASE AND SULFURTRANSFERASE MOCS3"/>
    <property type="match status" value="1"/>
</dbReference>
<dbReference type="PANTHER" id="PTHR10953">
    <property type="entry name" value="UBIQUITIN-ACTIVATING ENZYME E1"/>
    <property type="match status" value="1"/>
</dbReference>
<dbReference type="Pfam" id="PF00581">
    <property type="entry name" value="Rhodanese"/>
    <property type="match status" value="1"/>
</dbReference>
<dbReference type="Pfam" id="PF00899">
    <property type="entry name" value="ThiF"/>
    <property type="match status" value="1"/>
</dbReference>
<dbReference type="SMART" id="SM00450">
    <property type="entry name" value="RHOD"/>
    <property type="match status" value="1"/>
</dbReference>
<dbReference type="SUPFAM" id="SSF69572">
    <property type="entry name" value="Activating enzymes of the ubiquitin-like proteins"/>
    <property type="match status" value="1"/>
</dbReference>
<dbReference type="PROSITE" id="PS50206">
    <property type="entry name" value="RHODANESE_3"/>
    <property type="match status" value="1"/>
</dbReference>